<dbReference type="EMBL" id="CP000867">
    <property type="protein sequence ID" value="ABX01480.1"/>
    <property type="molecule type" value="Genomic_DNA"/>
</dbReference>
<dbReference type="SMR" id="A9A807"/>
<dbReference type="STRING" id="444158.MmarC6_0663"/>
<dbReference type="KEGG" id="mmx:MmarC6_0663"/>
<dbReference type="eggNOG" id="arCOG04061">
    <property type="taxonomic scope" value="Archaea"/>
</dbReference>
<dbReference type="HOGENOM" id="CLU_146475_1_0_2"/>
<dbReference type="OrthoDB" id="53273at2157"/>
<dbReference type="GO" id="GO:0003723">
    <property type="term" value="F:RNA binding"/>
    <property type="evidence" value="ECO:0007669"/>
    <property type="project" value="UniProtKB-UniRule"/>
</dbReference>
<dbReference type="GO" id="GO:0015031">
    <property type="term" value="P:protein transport"/>
    <property type="evidence" value="ECO:0007669"/>
    <property type="project" value="UniProtKB-UniRule"/>
</dbReference>
<dbReference type="CDD" id="cd14359">
    <property type="entry name" value="UBA_AeNAC"/>
    <property type="match status" value="1"/>
</dbReference>
<dbReference type="Gene3D" id="1.10.8.10">
    <property type="entry name" value="DNA helicase RuvA subunit, C-terminal domain"/>
    <property type="match status" value="1"/>
</dbReference>
<dbReference type="Gene3D" id="2.20.70.30">
    <property type="entry name" value="Nascent polypeptide-associated complex domain"/>
    <property type="match status" value="1"/>
</dbReference>
<dbReference type="HAMAP" id="MF_00814">
    <property type="entry name" value="NAC_arch"/>
    <property type="match status" value="1"/>
</dbReference>
<dbReference type="InterPro" id="IPR044034">
    <property type="entry name" value="NAC-like_UBA"/>
</dbReference>
<dbReference type="InterPro" id="IPR038187">
    <property type="entry name" value="NAC_A/B_dom_sf"/>
</dbReference>
<dbReference type="InterPro" id="IPR005231">
    <property type="entry name" value="NAC_arc"/>
</dbReference>
<dbReference type="InterPro" id="IPR002715">
    <property type="entry name" value="Nas_poly-pep-assoc_cplx_dom"/>
</dbReference>
<dbReference type="InterPro" id="IPR009060">
    <property type="entry name" value="UBA-like_sf"/>
</dbReference>
<dbReference type="NCBIfam" id="TIGR00264">
    <property type="entry name" value="archaeal-type nascent polypeptide-associated complex protein"/>
    <property type="match status" value="1"/>
</dbReference>
<dbReference type="Pfam" id="PF01849">
    <property type="entry name" value="NAC"/>
    <property type="match status" value="1"/>
</dbReference>
<dbReference type="Pfam" id="PF19026">
    <property type="entry name" value="UBA_HYPK"/>
    <property type="match status" value="1"/>
</dbReference>
<dbReference type="SMART" id="SM01407">
    <property type="entry name" value="NAC"/>
    <property type="match status" value="1"/>
</dbReference>
<dbReference type="SUPFAM" id="SSF46934">
    <property type="entry name" value="UBA-like"/>
    <property type="match status" value="1"/>
</dbReference>
<dbReference type="PROSITE" id="PS51151">
    <property type="entry name" value="NAC_AB"/>
    <property type="match status" value="1"/>
</dbReference>
<evidence type="ECO:0000255" key="1">
    <source>
        <dbReference type="HAMAP-Rule" id="MF_00814"/>
    </source>
</evidence>
<comment type="function">
    <text evidence="1">Contacts the emerging nascent chain on the ribosome.</text>
</comment>
<comment type="subunit">
    <text evidence="1">Homodimer. Interacts with the ribosome. Binds ribosomal RNA.</text>
</comment>
<comment type="similarity">
    <text evidence="1">Belongs to the NAC-alpha family.</text>
</comment>
<gene>
    <name evidence="1" type="primary">nac</name>
    <name type="ordered locus">MmarC6_0663</name>
</gene>
<name>NAC_METM6</name>
<feature type="chain" id="PRO_1000134092" description="Nascent polypeptide-associated complex protein">
    <location>
        <begin position="1"/>
        <end position="126"/>
    </location>
</feature>
<feature type="domain" description="NAC-A/B" evidence="1">
    <location>
        <begin position="10"/>
        <end position="77"/>
    </location>
</feature>
<organism>
    <name type="scientific">Methanococcus maripaludis (strain C6 / ATCC BAA-1332)</name>
    <dbReference type="NCBI Taxonomy" id="444158"/>
    <lineage>
        <taxon>Archaea</taxon>
        <taxon>Methanobacteriati</taxon>
        <taxon>Methanobacteriota</taxon>
        <taxon>Methanomada group</taxon>
        <taxon>Methanococci</taxon>
        <taxon>Methanococcales</taxon>
        <taxon>Methanococcaceae</taxon>
        <taxon>Methanococcus</taxon>
    </lineage>
</organism>
<sequence length="126" mass="13990">MFPGGGKFNPRMMKQMQKMMKDFGMDAEDLKAVKVTIELEDTILVFEKPKVQVMDMLGNKTYSITGKAKKVAKAEEKIEDVEVKVEVTEEDVEMVSSQCGVSKEEAKKALEEANGDLAEAILKLGN</sequence>
<proteinExistence type="inferred from homology"/>
<reference key="1">
    <citation type="submission" date="2007-10" db="EMBL/GenBank/DDBJ databases">
        <title>Complete sequence of Methanococcus maripaludis C6.</title>
        <authorList>
            <consortium name="US DOE Joint Genome Institute"/>
            <person name="Copeland A."/>
            <person name="Lucas S."/>
            <person name="Lapidus A."/>
            <person name="Barry K."/>
            <person name="Glavina del Rio T."/>
            <person name="Dalin E."/>
            <person name="Tice H."/>
            <person name="Pitluck S."/>
            <person name="Clum A."/>
            <person name="Schmutz J."/>
            <person name="Larimer F."/>
            <person name="Land M."/>
            <person name="Hauser L."/>
            <person name="Kyrpides N."/>
            <person name="Mikhailova N."/>
            <person name="Sieprawska-Lupa M."/>
            <person name="Whitman W.B."/>
            <person name="Richardson P."/>
        </authorList>
    </citation>
    <scope>NUCLEOTIDE SEQUENCE [LARGE SCALE GENOMIC DNA]</scope>
    <source>
        <strain>C6 / ATCC BAA-1332</strain>
    </source>
</reference>
<accession>A9A807</accession>
<protein>
    <recommendedName>
        <fullName evidence="1">Nascent polypeptide-associated complex protein</fullName>
    </recommendedName>
</protein>
<keyword id="KW-0653">Protein transport</keyword>
<keyword id="KW-0694">RNA-binding</keyword>
<keyword id="KW-0813">Transport</keyword>